<reference key="1">
    <citation type="journal article" date="2003" name="Plant Mol. Biol.">
        <title>Characterization of all the subunits of replication factor C from a higher plant, rice (Oryza sativa L.), and their relation to development.</title>
        <authorList>
            <person name="Furukawa T."/>
            <person name="Ishibashi T."/>
            <person name="Kimura S."/>
            <person name="Tanaka H."/>
            <person name="Hashimoto J."/>
            <person name="Sakaguchi K."/>
        </authorList>
    </citation>
    <scope>NUCLEOTIDE SEQUENCE [MRNA]</scope>
    <scope>TISSUE SPECIFICITY</scope>
    <scope>INDUCTION</scope>
    <scope>GENE FAMILY</scope>
    <source>
        <strain>cv. Nipponbare</strain>
    </source>
</reference>
<reference key="2">
    <citation type="journal article" date="2005" name="BMC Biol.">
        <title>The sequence of rice chromosomes 11 and 12, rich in disease resistance genes and recent gene duplications.</title>
        <authorList>
            <consortium name="The rice chromosomes 11 and 12 sequencing consortia"/>
        </authorList>
    </citation>
    <scope>NUCLEOTIDE SEQUENCE [LARGE SCALE GENOMIC DNA]</scope>
    <source>
        <strain>cv. Nipponbare</strain>
    </source>
</reference>
<reference key="3">
    <citation type="journal article" date="2005" name="Nature">
        <title>The map-based sequence of the rice genome.</title>
        <authorList>
            <consortium name="International rice genome sequencing project (IRGSP)"/>
        </authorList>
    </citation>
    <scope>NUCLEOTIDE SEQUENCE [LARGE SCALE GENOMIC DNA]</scope>
    <source>
        <strain>cv. Nipponbare</strain>
    </source>
</reference>
<reference key="4">
    <citation type="journal article" date="2008" name="Nucleic Acids Res.">
        <title>The rice annotation project database (RAP-DB): 2008 update.</title>
        <authorList>
            <consortium name="The rice annotation project (RAP)"/>
        </authorList>
    </citation>
    <scope>GENOME REANNOTATION</scope>
    <source>
        <strain>cv. Nipponbare</strain>
    </source>
</reference>
<reference key="5">
    <citation type="journal article" date="2013" name="Rice">
        <title>Improvement of the Oryza sativa Nipponbare reference genome using next generation sequence and optical map data.</title>
        <authorList>
            <person name="Kawahara Y."/>
            <person name="de la Bastide M."/>
            <person name="Hamilton J.P."/>
            <person name="Kanamori H."/>
            <person name="McCombie W.R."/>
            <person name="Ouyang S."/>
            <person name="Schwartz D.C."/>
            <person name="Tanaka T."/>
            <person name="Wu J."/>
            <person name="Zhou S."/>
            <person name="Childs K.L."/>
            <person name="Davidson R.M."/>
            <person name="Lin H."/>
            <person name="Quesada-Ocampo L."/>
            <person name="Vaillancourt B."/>
            <person name="Sakai H."/>
            <person name="Lee S.S."/>
            <person name="Kim J."/>
            <person name="Numa H."/>
            <person name="Itoh T."/>
            <person name="Buell C.R."/>
            <person name="Matsumoto T."/>
        </authorList>
    </citation>
    <scope>GENOME REANNOTATION</scope>
    <source>
        <strain>cv. Nipponbare</strain>
    </source>
</reference>
<reference key="6">
    <citation type="journal article" date="2005" name="PLoS Biol.">
        <title>The genomes of Oryza sativa: a history of duplications.</title>
        <authorList>
            <person name="Yu J."/>
            <person name="Wang J."/>
            <person name="Lin W."/>
            <person name="Li S."/>
            <person name="Li H."/>
            <person name="Zhou J."/>
            <person name="Ni P."/>
            <person name="Dong W."/>
            <person name="Hu S."/>
            <person name="Zeng C."/>
            <person name="Zhang J."/>
            <person name="Zhang Y."/>
            <person name="Li R."/>
            <person name="Xu Z."/>
            <person name="Li S."/>
            <person name="Li X."/>
            <person name="Zheng H."/>
            <person name="Cong L."/>
            <person name="Lin L."/>
            <person name="Yin J."/>
            <person name="Geng J."/>
            <person name="Li G."/>
            <person name="Shi J."/>
            <person name="Liu J."/>
            <person name="Lv H."/>
            <person name="Li J."/>
            <person name="Wang J."/>
            <person name="Deng Y."/>
            <person name="Ran L."/>
            <person name="Shi X."/>
            <person name="Wang X."/>
            <person name="Wu Q."/>
            <person name="Li C."/>
            <person name="Ren X."/>
            <person name="Wang J."/>
            <person name="Wang X."/>
            <person name="Li D."/>
            <person name="Liu D."/>
            <person name="Zhang X."/>
            <person name="Ji Z."/>
            <person name="Zhao W."/>
            <person name="Sun Y."/>
            <person name="Zhang Z."/>
            <person name="Bao J."/>
            <person name="Han Y."/>
            <person name="Dong L."/>
            <person name="Ji J."/>
            <person name="Chen P."/>
            <person name="Wu S."/>
            <person name="Liu J."/>
            <person name="Xiao Y."/>
            <person name="Bu D."/>
            <person name="Tan J."/>
            <person name="Yang L."/>
            <person name="Ye C."/>
            <person name="Zhang J."/>
            <person name="Xu J."/>
            <person name="Zhou Y."/>
            <person name="Yu Y."/>
            <person name="Zhang B."/>
            <person name="Zhuang S."/>
            <person name="Wei H."/>
            <person name="Liu B."/>
            <person name="Lei M."/>
            <person name="Yu H."/>
            <person name="Li Y."/>
            <person name="Xu H."/>
            <person name="Wei S."/>
            <person name="He X."/>
            <person name="Fang L."/>
            <person name="Zhang Z."/>
            <person name="Zhang Y."/>
            <person name="Huang X."/>
            <person name="Su Z."/>
            <person name="Tong W."/>
            <person name="Li J."/>
            <person name="Tong Z."/>
            <person name="Li S."/>
            <person name="Ye J."/>
            <person name="Wang L."/>
            <person name="Fang L."/>
            <person name="Lei T."/>
            <person name="Chen C.-S."/>
            <person name="Chen H.-C."/>
            <person name="Xu Z."/>
            <person name="Li H."/>
            <person name="Huang H."/>
            <person name="Zhang F."/>
            <person name="Xu H."/>
            <person name="Li N."/>
            <person name="Zhao C."/>
            <person name="Li S."/>
            <person name="Dong L."/>
            <person name="Huang Y."/>
            <person name="Li L."/>
            <person name="Xi Y."/>
            <person name="Qi Q."/>
            <person name="Li W."/>
            <person name="Zhang B."/>
            <person name="Hu W."/>
            <person name="Zhang Y."/>
            <person name="Tian X."/>
            <person name="Jiao Y."/>
            <person name="Liang X."/>
            <person name="Jin J."/>
            <person name="Gao L."/>
            <person name="Zheng W."/>
            <person name="Hao B."/>
            <person name="Liu S.-M."/>
            <person name="Wang W."/>
            <person name="Yuan L."/>
            <person name="Cao M."/>
            <person name="McDermott J."/>
            <person name="Samudrala R."/>
            <person name="Wang J."/>
            <person name="Wong G.K.-S."/>
            <person name="Yang H."/>
        </authorList>
    </citation>
    <scope>NUCLEOTIDE SEQUENCE [LARGE SCALE GENOMIC DNA]</scope>
    <source>
        <strain>cv. Nipponbare</strain>
    </source>
</reference>
<reference key="7">
    <citation type="journal article" date="2003" name="Science">
        <title>Collection, mapping, and annotation of over 28,000 cDNA clones from japonica rice.</title>
        <authorList>
            <consortium name="The rice full-length cDNA consortium"/>
        </authorList>
    </citation>
    <scope>NUCLEOTIDE SEQUENCE [LARGE SCALE MRNA]</scope>
    <source>
        <strain>cv. Nipponbare</strain>
    </source>
</reference>
<dbReference type="EMBL" id="AB045677">
    <property type="protein sequence ID" value="BAB16441.1"/>
    <property type="molecule type" value="mRNA"/>
</dbReference>
<dbReference type="EMBL" id="DP000011">
    <property type="protein sequence ID" value="ABA96606.1"/>
    <property type="molecule type" value="Genomic_DNA"/>
</dbReference>
<dbReference type="EMBL" id="AP008218">
    <property type="protein sequence ID" value="BAF29315.2"/>
    <property type="molecule type" value="Genomic_DNA"/>
</dbReference>
<dbReference type="EMBL" id="AP014968">
    <property type="protein sequence ID" value="BAT16111.1"/>
    <property type="molecule type" value="Genomic_DNA"/>
</dbReference>
<dbReference type="EMBL" id="CM000149">
    <property type="protein sequence ID" value="EAZ19823.1"/>
    <property type="molecule type" value="Genomic_DNA"/>
</dbReference>
<dbReference type="EMBL" id="AK103718">
    <property type="protein sequence ID" value="BAG96226.1"/>
    <property type="molecule type" value="mRNA"/>
</dbReference>
<dbReference type="RefSeq" id="XP_015618344.1">
    <property type="nucleotide sequence ID" value="XM_015762858.1"/>
</dbReference>
<dbReference type="SMR" id="Q9FXM3"/>
<dbReference type="FunCoup" id="Q9FXM3">
    <property type="interactions" value="1090"/>
</dbReference>
<dbReference type="STRING" id="39947.Q9FXM3"/>
<dbReference type="PaxDb" id="39947-Q9FXM3"/>
<dbReference type="EnsemblPlants" id="Os12t0176500-01">
    <property type="protein sequence ID" value="Os12t0176500-01"/>
    <property type="gene ID" value="Os12g0176500"/>
</dbReference>
<dbReference type="Gramene" id="Os12t0176500-01">
    <property type="protein sequence ID" value="Os12t0176500-01"/>
    <property type="gene ID" value="Os12g0176500"/>
</dbReference>
<dbReference type="KEGG" id="dosa:Os12g0176500"/>
<dbReference type="eggNOG" id="KOG0989">
    <property type="taxonomic scope" value="Eukaryota"/>
</dbReference>
<dbReference type="HOGENOM" id="CLU_042324_1_0_1"/>
<dbReference type="InParanoid" id="Q9FXM3"/>
<dbReference type="OMA" id="GCQSGSF"/>
<dbReference type="OrthoDB" id="4199794at2759"/>
<dbReference type="PlantReactome" id="R-OSA-9675815">
    <property type="pathway name" value="Leading strand synthesis"/>
</dbReference>
<dbReference type="Proteomes" id="UP000000763">
    <property type="component" value="Chromosome 12"/>
</dbReference>
<dbReference type="Proteomes" id="UP000007752">
    <property type="component" value="Chromosome 12"/>
</dbReference>
<dbReference type="Proteomes" id="UP000059680">
    <property type="component" value="Chromosome 12"/>
</dbReference>
<dbReference type="GO" id="GO:0005663">
    <property type="term" value="C:DNA replication factor C complex"/>
    <property type="evidence" value="ECO:0000318"/>
    <property type="project" value="GO_Central"/>
</dbReference>
<dbReference type="GO" id="GO:0005634">
    <property type="term" value="C:nucleus"/>
    <property type="evidence" value="ECO:0000318"/>
    <property type="project" value="GO_Central"/>
</dbReference>
<dbReference type="GO" id="GO:0005524">
    <property type="term" value="F:ATP binding"/>
    <property type="evidence" value="ECO:0007669"/>
    <property type="project" value="UniProtKB-KW"/>
</dbReference>
<dbReference type="GO" id="GO:0016887">
    <property type="term" value="F:ATP hydrolysis activity"/>
    <property type="evidence" value="ECO:0007669"/>
    <property type="project" value="InterPro"/>
</dbReference>
<dbReference type="GO" id="GO:0003677">
    <property type="term" value="F:DNA binding"/>
    <property type="evidence" value="ECO:0007669"/>
    <property type="project" value="InterPro"/>
</dbReference>
<dbReference type="GO" id="GO:0006281">
    <property type="term" value="P:DNA repair"/>
    <property type="evidence" value="ECO:0000318"/>
    <property type="project" value="GO_Central"/>
</dbReference>
<dbReference type="GO" id="GO:0006261">
    <property type="term" value="P:DNA-templated DNA replication"/>
    <property type="evidence" value="ECO:0000318"/>
    <property type="project" value="GO_Central"/>
</dbReference>
<dbReference type="CDD" id="cd00009">
    <property type="entry name" value="AAA"/>
    <property type="match status" value="1"/>
</dbReference>
<dbReference type="CDD" id="cd18140">
    <property type="entry name" value="HLD_clamp_RFC"/>
    <property type="match status" value="1"/>
</dbReference>
<dbReference type="FunFam" id="1.10.8.60:FF:000032">
    <property type="entry name" value="Replication factor C subunit 4"/>
    <property type="match status" value="1"/>
</dbReference>
<dbReference type="FunFam" id="1.20.272.10:FF:000016">
    <property type="entry name" value="Replication factor C subunit 4"/>
    <property type="match status" value="1"/>
</dbReference>
<dbReference type="FunFam" id="3.40.50.300:FF:000129">
    <property type="entry name" value="Replication factor C subunit 5"/>
    <property type="match status" value="1"/>
</dbReference>
<dbReference type="Gene3D" id="1.10.8.60">
    <property type="match status" value="1"/>
</dbReference>
<dbReference type="Gene3D" id="1.20.272.10">
    <property type="match status" value="1"/>
</dbReference>
<dbReference type="Gene3D" id="3.40.50.300">
    <property type="entry name" value="P-loop containing nucleotide triphosphate hydrolases"/>
    <property type="match status" value="1"/>
</dbReference>
<dbReference type="InterPro" id="IPR003593">
    <property type="entry name" value="AAA+_ATPase"/>
</dbReference>
<dbReference type="InterPro" id="IPR003959">
    <property type="entry name" value="ATPase_AAA_core"/>
</dbReference>
<dbReference type="InterPro" id="IPR008921">
    <property type="entry name" value="DNA_pol3_clamp-load_cplx_C"/>
</dbReference>
<dbReference type="InterPro" id="IPR050238">
    <property type="entry name" value="DNA_Rep/Repair_Clamp_Loader"/>
</dbReference>
<dbReference type="InterPro" id="IPR027417">
    <property type="entry name" value="P-loop_NTPase"/>
</dbReference>
<dbReference type="InterPro" id="IPR013748">
    <property type="entry name" value="Rep_factorC_C"/>
</dbReference>
<dbReference type="InterPro" id="IPR047854">
    <property type="entry name" value="RFC_lid"/>
</dbReference>
<dbReference type="NCBIfam" id="NF001679">
    <property type="entry name" value="PRK00440.1"/>
    <property type="match status" value="1"/>
</dbReference>
<dbReference type="PANTHER" id="PTHR11669">
    <property type="entry name" value="REPLICATION FACTOR C / DNA POLYMERASE III GAMMA-TAU SUBUNIT"/>
    <property type="match status" value="1"/>
</dbReference>
<dbReference type="PANTHER" id="PTHR11669:SF20">
    <property type="entry name" value="REPLICATION FACTOR C SUBUNIT 4"/>
    <property type="match status" value="1"/>
</dbReference>
<dbReference type="Pfam" id="PF00004">
    <property type="entry name" value="AAA"/>
    <property type="match status" value="1"/>
</dbReference>
<dbReference type="Pfam" id="PF21960">
    <property type="entry name" value="RCF1-5-like_lid"/>
    <property type="match status" value="1"/>
</dbReference>
<dbReference type="Pfam" id="PF08542">
    <property type="entry name" value="Rep_fac_C"/>
    <property type="match status" value="1"/>
</dbReference>
<dbReference type="SMART" id="SM00382">
    <property type="entry name" value="AAA"/>
    <property type="match status" value="1"/>
</dbReference>
<dbReference type="SUPFAM" id="SSF52540">
    <property type="entry name" value="P-loop containing nucleoside triphosphate hydrolases"/>
    <property type="match status" value="1"/>
</dbReference>
<dbReference type="SUPFAM" id="SSF48019">
    <property type="entry name" value="post-AAA+ oligomerization domain-like"/>
    <property type="match status" value="1"/>
</dbReference>
<organism>
    <name type="scientific">Oryza sativa subsp. japonica</name>
    <name type="common">Rice</name>
    <dbReference type="NCBI Taxonomy" id="39947"/>
    <lineage>
        <taxon>Eukaryota</taxon>
        <taxon>Viridiplantae</taxon>
        <taxon>Streptophyta</taxon>
        <taxon>Embryophyta</taxon>
        <taxon>Tracheophyta</taxon>
        <taxon>Spermatophyta</taxon>
        <taxon>Magnoliopsida</taxon>
        <taxon>Liliopsida</taxon>
        <taxon>Poales</taxon>
        <taxon>Poaceae</taxon>
        <taxon>BOP clade</taxon>
        <taxon>Oryzoideae</taxon>
        <taxon>Oryzeae</taxon>
        <taxon>Oryzinae</taxon>
        <taxon>Oryza</taxon>
        <taxon>Oryza sativa</taxon>
    </lineage>
</organism>
<evidence type="ECO:0000250" key="1"/>
<evidence type="ECO:0000255" key="2"/>
<evidence type="ECO:0000269" key="3">
    <source>
    </source>
</evidence>
<evidence type="ECO:0000305" key="4"/>
<name>RFC2_ORYSJ</name>
<proteinExistence type="evidence at transcript level"/>
<comment type="function">
    <text evidence="1">May be involved in DNA replication and thus regulate cell proliferation.</text>
</comment>
<comment type="subunit">
    <text evidence="1">Heterotetramer of subunits RFC2, RFC3, RFC4 and RFC5 that can form a complex with RFC1.</text>
</comment>
<comment type="subcellular location">
    <subcellularLocation>
        <location evidence="1">Nucleus</location>
    </subcellularLocation>
</comment>
<comment type="tissue specificity">
    <text evidence="3">Expressed in roots, leaves, shoot apical meristem (SAM), flag leaves and panicles.</text>
</comment>
<comment type="induction">
    <text evidence="3">Down-regulated by sucrose starvation.</text>
</comment>
<comment type="similarity">
    <text evidence="4">Belongs to the activator 1 small subunits family.</text>
</comment>
<protein>
    <recommendedName>
        <fullName>Replication factor C subunit 2</fullName>
        <shortName>OsRFC2</shortName>
    </recommendedName>
    <alternativeName>
        <fullName>Activator 1 subunit 2</fullName>
    </alternativeName>
</protein>
<accession>Q9FXM3</accession>
<accession>A0A0P0Y7I8</accession>
<accession>Q0IPQ0</accession>
<keyword id="KW-0067">ATP-binding</keyword>
<keyword id="KW-0235">DNA replication</keyword>
<keyword id="KW-0547">Nucleotide-binding</keyword>
<keyword id="KW-0539">Nucleus</keyword>
<keyword id="KW-1185">Reference proteome</keyword>
<sequence length="339" mass="37426">MAPLVPSSQPWVEKYRPRQVKDVAHQEEVVRVLTTTLQTADLPHMLFYGPPGTGKTTTALAIAYQLYGPELYKSRVLELNASDDRGINVVRTKIKDFAAVAVGSARKGGYPCPPYKIIILDEADSMTEDAQNALRRTMETYSKVTRFFFICNYISRIIEPLASRCAKFRFKPLSEEVMSNRILHICNEEGLSLDAQALATLSTISNGDLRRAITYLQSAARLFGSSISSTDLISVSGAIPEDVVKSLLASCKSGEFDVANKEVNNIIADGYPVSQLISQFLDVIVNADDIPDEQKARICKKLGEADKCLVDGADEYLQLLDVASETIRALFDMPQTLVF</sequence>
<feature type="chain" id="PRO_0000422635" description="Replication factor C subunit 2">
    <location>
        <begin position="1"/>
        <end position="339"/>
    </location>
</feature>
<feature type="binding site" evidence="2">
    <location>
        <begin position="48"/>
        <end position="55"/>
    </location>
    <ligand>
        <name>ATP</name>
        <dbReference type="ChEBI" id="CHEBI:30616"/>
    </ligand>
</feature>
<gene>
    <name type="primary">RFC2</name>
    <name type="ordered locus">Os12g0176500</name>
    <name type="ordered locus">LOC_Os12g07720</name>
    <name type="ORF">OsJ_35406</name>
</gene>